<proteinExistence type="inferred from homology"/>
<gene>
    <name evidence="1" type="primary">noc</name>
    <name type="ordered locus">BCAH187_A5668</name>
</gene>
<sequence length="290" mass="33629">MKNTFSRLFGFGDKESEFELQDESHEEIDKKVYEEIQEIPIVNITPNRYQPRTVFDDARIEELALTIRTHGLIQPIVVRQYEDEKYEIIAGERRFRAATKLGWEKVPAIIKNLNDTETASVALIENLQREELTAIEEAVAYQKLIELHNLTQEALAQRLGKGQSTIANKLRLLKLPEEIKNALLEKSITERHARALIPLKNEELQLKVLQEIVEKQLNVKQTEERIAKLLEEAKPKRKAKQKAVSRDTRIAMNTIRQSLQMVADSGLNVNSEEEEFDEYYQITIQIPKKK</sequence>
<reference key="1">
    <citation type="submission" date="2008-10" db="EMBL/GenBank/DDBJ databases">
        <title>Genome sequence of Bacillus cereus AH187.</title>
        <authorList>
            <person name="Dodson R.J."/>
            <person name="Durkin A.S."/>
            <person name="Rosovitz M.J."/>
            <person name="Rasko D.A."/>
            <person name="Kolsto A.B."/>
            <person name="Okstad O.A."/>
            <person name="Ravel J."/>
            <person name="Sutton G."/>
        </authorList>
    </citation>
    <scope>NUCLEOTIDE SEQUENCE [LARGE SCALE GENOMIC DNA]</scope>
    <source>
        <strain>AH187</strain>
    </source>
</reference>
<evidence type="ECO:0000255" key="1">
    <source>
        <dbReference type="HAMAP-Rule" id="MF_02015"/>
    </source>
</evidence>
<comment type="function">
    <text evidence="1">Effects nucleoid occlusion by binding relatively nonspecifically to DNA and preventing the assembly of the division machinery in the vicinity of the nucleoid, especially under conditions that disturb the cell cycle. It helps to coordinate cell division and chromosome segregation by preventing the formation of the Z ring through the nucleoid, which would cause chromosome breakage.</text>
</comment>
<comment type="subcellular location">
    <subcellularLocation>
        <location evidence="1">Cytoplasm</location>
        <location evidence="1">Nucleoid</location>
    </subcellularLocation>
</comment>
<comment type="similarity">
    <text evidence="1">Belongs to the ParB family.</text>
</comment>
<feature type="chain" id="PRO_1000189533" description="Nucleoid occlusion protein">
    <location>
        <begin position="1"/>
        <end position="290"/>
    </location>
</feature>
<feature type="DNA-binding region" description="H-T-H motif" evidence="1">
    <location>
        <begin position="153"/>
        <end position="172"/>
    </location>
</feature>
<dbReference type="EMBL" id="CP001177">
    <property type="protein sequence ID" value="ACJ80048.1"/>
    <property type="molecule type" value="Genomic_DNA"/>
</dbReference>
<dbReference type="SMR" id="B7HZG7"/>
<dbReference type="KEGG" id="bcr:BCAH187_A5668"/>
<dbReference type="HOGENOM" id="CLU_023853_0_1_9"/>
<dbReference type="Proteomes" id="UP000002214">
    <property type="component" value="Chromosome"/>
</dbReference>
<dbReference type="GO" id="GO:0005694">
    <property type="term" value="C:chromosome"/>
    <property type="evidence" value="ECO:0007669"/>
    <property type="project" value="TreeGrafter"/>
</dbReference>
<dbReference type="GO" id="GO:0005737">
    <property type="term" value="C:cytoplasm"/>
    <property type="evidence" value="ECO:0007669"/>
    <property type="project" value="UniProtKB-UniRule"/>
</dbReference>
<dbReference type="GO" id="GO:0009295">
    <property type="term" value="C:nucleoid"/>
    <property type="evidence" value="ECO:0007669"/>
    <property type="project" value="UniProtKB-SubCell"/>
</dbReference>
<dbReference type="GO" id="GO:0003677">
    <property type="term" value="F:DNA binding"/>
    <property type="evidence" value="ECO:0007669"/>
    <property type="project" value="UniProtKB-UniRule"/>
</dbReference>
<dbReference type="GO" id="GO:0007059">
    <property type="term" value="P:chromosome segregation"/>
    <property type="evidence" value="ECO:0007669"/>
    <property type="project" value="TreeGrafter"/>
</dbReference>
<dbReference type="GO" id="GO:0000917">
    <property type="term" value="P:division septum assembly"/>
    <property type="evidence" value="ECO:0007669"/>
    <property type="project" value="UniProtKB-KW"/>
</dbReference>
<dbReference type="GO" id="GO:0045881">
    <property type="term" value="P:positive regulation of sporulation resulting in formation of a cellular spore"/>
    <property type="evidence" value="ECO:0007669"/>
    <property type="project" value="TreeGrafter"/>
</dbReference>
<dbReference type="CDD" id="cd16393">
    <property type="entry name" value="SPO0J_N"/>
    <property type="match status" value="1"/>
</dbReference>
<dbReference type="FunFam" id="1.10.10.2830:FF:000001">
    <property type="entry name" value="Chromosome partitioning protein ParB"/>
    <property type="match status" value="1"/>
</dbReference>
<dbReference type="FunFam" id="3.90.1530.30:FF:000001">
    <property type="entry name" value="Chromosome partitioning protein ParB"/>
    <property type="match status" value="1"/>
</dbReference>
<dbReference type="Gene3D" id="1.10.10.2830">
    <property type="match status" value="1"/>
</dbReference>
<dbReference type="Gene3D" id="3.90.1530.30">
    <property type="match status" value="1"/>
</dbReference>
<dbReference type="HAMAP" id="MF_02015">
    <property type="entry name" value="ParB_Noc"/>
    <property type="match status" value="1"/>
</dbReference>
<dbReference type="InterPro" id="IPR050336">
    <property type="entry name" value="Chromosome_partition/occlusion"/>
</dbReference>
<dbReference type="InterPro" id="IPR041468">
    <property type="entry name" value="HTH_ParB/Spo0J"/>
</dbReference>
<dbReference type="InterPro" id="IPR023705">
    <property type="entry name" value="Nucleoid_occlusion_protein"/>
</dbReference>
<dbReference type="InterPro" id="IPR004437">
    <property type="entry name" value="ParB/RepB/Spo0J"/>
</dbReference>
<dbReference type="InterPro" id="IPR003115">
    <property type="entry name" value="ParB/Sulfiredoxin_dom"/>
</dbReference>
<dbReference type="InterPro" id="IPR036086">
    <property type="entry name" value="ParB/Sulfiredoxin_sf"/>
</dbReference>
<dbReference type="NCBIfam" id="TIGR04285">
    <property type="entry name" value="nucleoid_noc"/>
    <property type="match status" value="1"/>
</dbReference>
<dbReference type="NCBIfam" id="TIGR00180">
    <property type="entry name" value="parB_part"/>
    <property type="match status" value="1"/>
</dbReference>
<dbReference type="PANTHER" id="PTHR33375">
    <property type="entry name" value="CHROMOSOME-PARTITIONING PROTEIN PARB-RELATED"/>
    <property type="match status" value="1"/>
</dbReference>
<dbReference type="PANTHER" id="PTHR33375:SF8">
    <property type="entry name" value="NUCLEOID OCCLUSION PROTEIN"/>
    <property type="match status" value="1"/>
</dbReference>
<dbReference type="Pfam" id="PF17762">
    <property type="entry name" value="HTH_ParB"/>
    <property type="match status" value="1"/>
</dbReference>
<dbReference type="Pfam" id="PF02195">
    <property type="entry name" value="ParBc"/>
    <property type="match status" value="1"/>
</dbReference>
<dbReference type="SMART" id="SM00470">
    <property type="entry name" value="ParB"/>
    <property type="match status" value="1"/>
</dbReference>
<dbReference type="SUPFAM" id="SSF110849">
    <property type="entry name" value="ParB/Sulfiredoxin"/>
    <property type="match status" value="1"/>
</dbReference>
<name>NOC_BACC7</name>
<keyword id="KW-0131">Cell cycle</keyword>
<keyword id="KW-0132">Cell division</keyword>
<keyword id="KW-0963">Cytoplasm</keyword>
<keyword id="KW-0238">DNA-binding</keyword>
<keyword id="KW-0717">Septation</keyword>
<accession>B7HZG7</accession>
<organism>
    <name type="scientific">Bacillus cereus (strain AH187)</name>
    <dbReference type="NCBI Taxonomy" id="405534"/>
    <lineage>
        <taxon>Bacteria</taxon>
        <taxon>Bacillati</taxon>
        <taxon>Bacillota</taxon>
        <taxon>Bacilli</taxon>
        <taxon>Bacillales</taxon>
        <taxon>Bacillaceae</taxon>
        <taxon>Bacillus</taxon>
        <taxon>Bacillus cereus group</taxon>
    </lineage>
</organism>
<protein>
    <recommendedName>
        <fullName evidence="1">Nucleoid occlusion protein</fullName>
        <shortName evidence="1">Noc</shortName>
    </recommendedName>
</protein>